<name>NAR1_ASPFN</name>
<keyword id="KW-0004">4Fe-4S</keyword>
<keyword id="KW-0408">Iron</keyword>
<keyword id="KW-0411">Iron-sulfur</keyword>
<keyword id="KW-0479">Metal-binding</keyword>
<dbReference type="EMBL" id="EQ963473">
    <property type="protein sequence ID" value="EED55525.1"/>
    <property type="molecule type" value="Genomic_DNA"/>
</dbReference>
<dbReference type="RefSeq" id="XP_002374307.1">
    <property type="nucleotide sequence ID" value="XM_002374266.1"/>
</dbReference>
<dbReference type="SMR" id="B8N122"/>
<dbReference type="STRING" id="332952.B8N122"/>
<dbReference type="EnsemblFungi" id="EED55525">
    <property type="protein sequence ID" value="EED55525"/>
    <property type="gene ID" value="AFLA_027970"/>
</dbReference>
<dbReference type="VEuPathDB" id="FungiDB:AFLA_000648"/>
<dbReference type="eggNOG" id="KOG2439">
    <property type="taxonomic scope" value="Eukaryota"/>
</dbReference>
<dbReference type="HOGENOM" id="CLU_018240_0_1_1"/>
<dbReference type="OMA" id="GYLHHVL"/>
<dbReference type="GO" id="GO:0051539">
    <property type="term" value="F:4 iron, 4 sulfur cluster binding"/>
    <property type="evidence" value="ECO:0007669"/>
    <property type="project" value="UniProtKB-KW"/>
</dbReference>
<dbReference type="GO" id="GO:0051536">
    <property type="term" value="F:iron-sulfur cluster binding"/>
    <property type="evidence" value="ECO:0000250"/>
    <property type="project" value="UniProtKB"/>
</dbReference>
<dbReference type="GO" id="GO:0046872">
    <property type="term" value="F:metal ion binding"/>
    <property type="evidence" value="ECO:0007669"/>
    <property type="project" value="UniProtKB-KW"/>
</dbReference>
<dbReference type="GO" id="GO:0016226">
    <property type="term" value="P:iron-sulfur cluster assembly"/>
    <property type="evidence" value="ECO:0000250"/>
    <property type="project" value="UniProtKB"/>
</dbReference>
<dbReference type="FunFam" id="3.30.70.20:FF:000042">
    <property type="entry name" value="Cytosolic Fe-S cluster assembly factor NAR1"/>
    <property type="match status" value="1"/>
</dbReference>
<dbReference type="Gene3D" id="3.40.950.10">
    <property type="entry name" value="Fe-only Hydrogenase (Larger Subunit), Chain L, domain 3"/>
    <property type="match status" value="1"/>
</dbReference>
<dbReference type="InterPro" id="IPR050340">
    <property type="entry name" value="Cytosolic_Fe-S_CAF"/>
</dbReference>
<dbReference type="InterPro" id="IPR009016">
    <property type="entry name" value="Fe_hydrogenase"/>
</dbReference>
<dbReference type="InterPro" id="IPR004108">
    <property type="entry name" value="Fe_hydrogenase_lsu_C"/>
</dbReference>
<dbReference type="PANTHER" id="PTHR11615">
    <property type="entry name" value="NITRATE, FORMATE, IRON DEHYDROGENASE"/>
    <property type="match status" value="1"/>
</dbReference>
<dbReference type="Pfam" id="PF02906">
    <property type="entry name" value="Fe_hyd_lg_C"/>
    <property type="match status" value="1"/>
</dbReference>
<dbReference type="SUPFAM" id="SSF53920">
    <property type="entry name" value="Fe-only hydrogenase"/>
    <property type="match status" value="1"/>
</dbReference>
<reference key="1">
    <citation type="journal article" date="2015" name="Genome Announc.">
        <title>Genome sequence of Aspergillus flavus NRRL 3357, a strain that causes aflatoxin contamination of food and feed.</title>
        <authorList>
            <person name="Nierman W.C."/>
            <person name="Yu J."/>
            <person name="Fedorova-Abrams N.D."/>
            <person name="Losada L."/>
            <person name="Cleveland T.E."/>
            <person name="Bhatnagar D."/>
            <person name="Bennett J.W."/>
            <person name="Dean R."/>
            <person name="Payne G.A."/>
        </authorList>
    </citation>
    <scope>NUCLEOTIDE SEQUENCE [LARGE SCALE GENOMIC DNA]</scope>
    <source>
        <strain>ATCC 200026 / FGSC A1120 / IAM 13836 / NRRL 3357 / JCM 12722 / SRRC 167</strain>
    </source>
</reference>
<accession>B8N122</accession>
<evidence type="ECO:0000250" key="1"/>
<evidence type="ECO:0000255" key="2"/>
<evidence type="ECO:0000256" key="3">
    <source>
        <dbReference type="SAM" id="MobiDB-lite"/>
    </source>
</evidence>
<evidence type="ECO:0000305" key="4"/>
<comment type="function">
    <text evidence="1">Component of the cytosolic Fe/S protein assembly machinery. Required for maturation of extramitochondrial Fe/S proteins. May play a role in the transfer of pre-assembled Fe/S clusters to target apoproteins (By similarity).</text>
</comment>
<comment type="similarity">
    <text evidence="4">Belongs to the NARF family.</text>
</comment>
<organism>
    <name type="scientific">Aspergillus flavus (strain ATCC 200026 / FGSC A1120 / IAM 13836 / NRRL 3357 / JCM 12722 / SRRC 167)</name>
    <dbReference type="NCBI Taxonomy" id="332952"/>
    <lineage>
        <taxon>Eukaryota</taxon>
        <taxon>Fungi</taxon>
        <taxon>Dikarya</taxon>
        <taxon>Ascomycota</taxon>
        <taxon>Pezizomycotina</taxon>
        <taxon>Eurotiomycetes</taxon>
        <taxon>Eurotiomycetidae</taxon>
        <taxon>Eurotiales</taxon>
        <taxon>Aspergillaceae</taxon>
        <taxon>Aspergillus</taxon>
        <taxon>Aspergillus subgen. Circumdati</taxon>
    </lineage>
</organism>
<feature type="chain" id="PRO_0000383715" description="Cytosolic Fe-S cluster assembly factor nar1">
    <location>
        <begin position="1"/>
        <end position="562"/>
    </location>
</feature>
<feature type="region of interest" description="Disordered" evidence="3">
    <location>
        <begin position="28"/>
        <end position="47"/>
    </location>
</feature>
<feature type="region of interest" description="Disordered" evidence="3">
    <location>
        <begin position="439"/>
        <end position="462"/>
    </location>
</feature>
<feature type="region of interest" description="Disordered" evidence="3">
    <location>
        <begin position="492"/>
        <end position="513"/>
    </location>
</feature>
<feature type="region of interest" description="Disordered" evidence="3">
    <location>
        <begin position="541"/>
        <end position="562"/>
    </location>
</feature>
<feature type="compositionally biased region" description="Polar residues" evidence="3">
    <location>
        <begin position="29"/>
        <end position="40"/>
    </location>
</feature>
<feature type="compositionally biased region" description="Polar residues" evidence="3">
    <location>
        <begin position="452"/>
        <end position="462"/>
    </location>
</feature>
<feature type="compositionally biased region" description="Polar residues" evidence="3">
    <location>
        <begin position="494"/>
        <end position="505"/>
    </location>
</feature>
<feature type="binding site" evidence="2">
    <location>
        <position position="20"/>
    </location>
    <ligand>
        <name>[4Fe-4S] cluster</name>
        <dbReference type="ChEBI" id="CHEBI:49883"/>
        <label>1</label>
    </ligand>
</feature>
<feature type="binding site" evidence="2">
    <location>
        <position position="62"/>
    </location>
    <ligand>
        <name>[4Fe-4S] cluster</name>
        <dbReference type="ChEBI" id="CHEBI:49883"/>
        <label>1</label>
    </ligand>
</feature>
<feature type="binding site" evidence="2">
    <location>
        <position position="65"/>
    </location>
    <ligand>
        <name>[4Fe-4S] cluster</name>
        <dbReference type="ChEBI" id="CHEBI:49883"/>
        <label>1</label>
    </ligand>
</feature>
<feature type="binding site" evidence="2">
    <location>
        <position position="68"/>
    </location>
    <ligand>
        <name>[4Fe-4S] cluster</name>
        <dbReference type="ChEBI" id="CHEBI:49883"/>
        <label>1</label>
    </ligand>
</feature>
<feature type="binding site" evidence="2">
    <location>
        <position position="214"/>
    </location>
    <ligand>
        <name>[4Fe-4S] cluster</name>
        <dbReference type="ChEBI" id="CHEBI:49883"/>
        <label>2</label>
    </ligand>
</feature>
<feature type="binding site" evidence="2">
    <location>
        <position position="269"/>
    </location>
    <ligand>
        <name>[4Fe-4S] cluster</name>
        <dbReference type="ChEBI" id="CHEBI:49883"/>
        <label>2</label>
    </ligand>
</feature>
<feature type="binding site" evidence="2">
    <location>
        <position position="475"/>
    </location>
    <ligand>
        <name>[4Fe-4S] cluster</name>
        <dbReference type="ChEBI" id="CHEBI:49883"/>
        <label>2</label>
    </ligand>
</feature>
<feature type="binding site" evidence="2">
    <location>
        <position position="479"/>
    </location>
    <ligand>
        <name>[4Fe-4S] cluster</name>
        <dbReference type="ChEBI" id="CHEBI:49883"/>
        <label>2</label>
    </ligand>
</feature>
<protein>
    <recommendedName>
        <fullName>Cytosolic Fe-S cluster assembly factor nar1</fullName>
    </recommendedName>
    <alternativeName>
        <fullName>Nuclear architecture-related protein 1</fullName>
    </alternativeName>
</protein>
<sequence length="562" mass="60371">MSAILSADDLNDFISPGVACIKPVETLPKNESSNSQNPYEVTTEDKVQPENLPPAQISLTDCLACSGCVTSAEAVLISLQSHAEVLNTLDAYPELPLTQNHNGPYTGSSDALDGESRIFVASVSPQVRASLAATYGISEKEATYMIDQFLSGPHGLRAGGKHGSGFSWVVDTNVMRDAILVLTADEVSETLKEPSARAISKDTLPKRPVLSSACPGWICYAEKTHPFVLPHLSRLKSPQALTGTFLKTVLSKALGVPPSRVWHLAIMPCFDKKLEASREELTDVSWSPLDGGVPLTESNKPVRDVDCVITTRELLTLASSRGISLPTLPLKSLAPSYTPHFPDETLNAFLFRKQNGSEQSMEAGTSGGYLHHVLKTFQAKNPGSEIVTQRGRNADVVEYSLMSPGGEPLMKAARYYGFRNIQNLVRKLKPARVSRLPGARVPAASAGGNRRQPISRNSASAGSGTDYAYVEVMACPGGCTNGGGQIRIEDAREASTSTQSVTAVENPSKPTPHEQRAWLARVDEAYFSAESDAEAKWTVRHSPSPSLRGRLGSMKLSSIGLT</sequence>
<gene>
    <name type="primary">nar1</name>
    <name type="ORF">AFLA_027970</name>
</gene>
<proteinExistence type="inferred from homology"/>